<gene>
    <name evidence="1" type="primary">astA</name>
    <name type="ordered locus">YE2468</name>
</gene>
<feature type="chain" id="PRO_1000065711" description="Arginine N-succinyltransferase">
    <location>
        <begin position="1"/>
        <end position="345"/>
    </location>
</feature>
<feature type="active site" description="Proton donor" evidence="1">
    <location>
        <position position="229"/>
    </location>
</feature>
<feature type="binding site" evidence="1">
    <location>
        <position position="125"/>
    </location>
    <ligand>
        <name>succinyl-CoA</name>
        <dbReference type="ChEBI" id="CHEBI:57292"/>
    </ligand>
</feature>
<organism>
    <name type="scientific">Yersinia enterocolitica serotype O:8 / biotype 1B (strain NCTC 13174 / 8081)</name>
    <dbReference type="NCBI Taxonomy" id="393305"/>
    <lineage>
        <taxon>Bacteria</taxon>
        <taxon>Pseudomonadati</taxon>
        <taxon>Pseudomonadota</taxon>
        <taxon>Gammaproteobacteria</taxon>
        <taxon>Enterobacterales</taxon>
        <taxon>Yersiniaceae</taxon>
        <taxon>Yersinia</taxon>
    </lineage>
</organism>
<reference key="1">
    <citation type="journal article" date="2006" name="PLoS Genet.">
        <title>The complete genome sequence and comparative genome analysis of the high pathogenicity Yersinia enterocolitica strain 8081.</title>
        <authorList>
            <person name="Thomson N.R."/>
            <person name="Howard S."/>
            <person name="Wren B.W."/>
            <person name="Holden M.T.G."/>
            <person name="Crossman L."/>
            <person name="Challis G.L."/>
            <person name="Churcher C."/>
            <person name="Mungall K."/>
            <person name="Brooks K."/>
            <person name="Chillingworth T."/>
            <person name="Feltwell T."/>
            <person name="Abdellah Z."/>
            <person name="Hauser H."/>
            <person name="Jagels K."/>
            <person name="Maddison M."/>
            <person name="Moule S."/>
            <person name="Sanders M."/>
            <person name="Whitehead S."/>
            <person name="Quail M.A."/>
            <person name="Dougan G."/>
            <person name="Parkhill J."/>
            <person name="Prentice M.B."/>
        </authorList>
    </citation>
    <scope>NUCLEOTIDE SEQUENCE [LARGE SCALE GENOMIC DNA]</scope>
    <source>
        <strain>NCTC 13174 / 8081</strain>
    </source>
</reference>
<accession>A1JS43</accession>
<dbReference type="EC" id="2.3.1.109" evidence="1"/>
<dbReference type="EMBL" id="AM286415">
    <property type="protein sequence ID" value="CAL12511.1"/>
    <property type="molecule type" value="Genomic_DNA"/>
</dbReference>
<dbReference type="RefSeq" id="WP_005169035.1">
    <property type="nucleotide sequence ID" value="NC_008800.1"/>
</dbReference>
<dbReference type="RefSeq" id="YP_001006675.1">
    <property type="nucleotide sequence ID" value="NC_008800.1"/>
</dbReference>
<dbReference type="SMR" id="A1JS43"/>
<dbReference type="KEGG" id="yen:YE2468"/>
<dbReference type="PATRIC" id="fig|393305.7.peg.2619"/>
<dbReference type="eggNOG" id="COG3138">
    <property type="taxonomic scope" value="Bacteria"/>
</dbReference>
<dbReference type="HOGENOM" id="CLU_057655_0_0_6"/>
<dbReference type="OrthoDB" id="21121at2"/>
<dbReference type="UniPathway" id="UPA00185">
    <property type="reaction ID" value="UER00279"/>
</dbReference>
<dbReference type="Proteomes" id="UP000000642">
    <property type="component" value="Chromosome"/>
</dbReference>
<dbReference type="GO" id="GO:0008791">
    <property type="term" value="F:arginine N-succinyltransferase activity"/>
    <property type="evidence" value="ECO:0007669"/>
    <property type="project" value="UniProtKB-UniRule"/>
</dbReference>
<dbReference type="GO" id="GO:0019544">
    <property type="term" value="P:arginine catabolic process to glutamate"/>
    <property type="evidence" value="ECO:0007669"/>
    <property type="project" value="UniProtKB-UniRule"/>
</dbReference>
<dbReference type="GO" id="GO:0019545">
    <property type="term" value="P:arginine catabolic process to succinate"/>
    <property type="evidence" value="ECO:0007669"/>
    <property type="project" value="UniProtKB-UniRule"/>
</dbReference>
<dbReference type="Gene3D" id="2.40.40.20">
    <property type="match status" value="1"/>
</dbReference>
<dbReference type="HAMAP" id="MF_01171">
    <property type="entry name" value="AstA"/>
    <property type="match status" value="1"/>
</dbReference>
<dbReference type="InterPro" id="IPR016181">
    <property type="entry name" value="Acyl_CoA_acyltransferase"/>
</dbReference>
<dbReference type="InterPro" id="IPR007041">
    <property type="entry name" value="Arg_succinylTrfase_AstA/AruG"/>
</dbReference>
<dbReference type="InterPro" id="IPR017650">
    <property type="entry name" value="Arginine_N-succinylTrfase"/>
</dbReference>
<dbReference type="NCBIfam" id="TIGR03243">
    <property type="entry name" value="arg_catab_AOST"/>
    <property type="match status" value="1"/>
</dbReference>
<dbReference type="NCBIfam" id="TIGR03244">
    <property type="entry name" value="arg_catab_AstA"/>
    <property type="match status" value="1"/>
</dbReference>
<dbReference type="NCBIfam" id="NF007770">
    <property type="entry name" value="PRK10456.1"/>
    <property type="match status" value="1"/>
</dbReference>
<dbReference type="PANTHER" id="PTHR30420:SF1">
    <property type="entry name" value="ARGININE N-SUCCINYLTRANSFERASE"/>
    <property type="match status" value="1"/>
</dbReference>
<dbReference type="PANTHER" id="PTHR30420">
    <property type="entry name" value="N-SUCCINYLARGININE DIHYDROLASE"/>
    <property type="match status" value="1"/>
</dbReference>
<dbReference type="Pfam" id="PF04958">
    <property type="entry name" value="AstA"/>
    <property type="match status" value="1"/>
</dbReference>
<dbReference type="SUPFAM" id="SSF55729">
    <property type="entry name" value="Acyl-CoA N-acyltransferases (Nat)"/>
    <property type="match status" value="1"/>
</dbReference>
<comment type="function">
    <text evidence="1">Catalyzes the transfer of succinyl-CoA to arginine to produce N(2)-succinylarginine.</text>
</comment>
<comment type="catalytic activity">
    <reaction evidence="1">
        <text>succinyl-CoA + L-arginine = N(2)-succinyl-L-arginine + CoA + H(+)</text>
        <dbReference type="Rhea" id="RHEA:15185"/>
        <dbReference type="ChEBI" id="CHEBI:15378"/>
        <dbReference type="ChEBI" id="CHEBI:32682"/>
        <dbReference type="ChEBI" id="CHEBI:57287"/>
        <dbReference type="ChEBI" id="CHEBI:57292"/>
        <dbReference type="ChEBI" id="CHEBI:58241"/>
        <dbReference type="EC" id="2.3.1.109"/>
    </reaction>
</comment>
<comment type="pathway">
    <text evidence="1">Amino-acid degradation; L-arginine degradation via AST pathway; L-glutamate and succinate from L-arginine: step 1/5.</text>
</comment>
<comment type="similarity">
    <text evidence="1">Belongs to the arginine N-succinyltransferase family.</text>
</comment>
<name>ASTA_YERE8</name>
<sequence length="345" mass="38669">MMRVRPVERRDLADILELAGKTGVGMTSLPQNEQHLAARIERALNTWQGSLAVGEQGYLFVLEDTEREKVVGVSAIEVAVGMNDPWYNFRVGTLVHASKTLNVYKSVPTLFLSNDHTGYSELCTLFLDPEYRKDKNGPFLSKVRFLFIAAFRQHFSRKLIAEMRGYTDEQGRSPFWENVGRHFFSIEFAKADYLSGTGQKAFIAELMPKHPLYVDFLAEEARAVIGQVHPHTAPARAVLETEGLQYQGYVDIFDGGPTLEANTDEVRAVRDSSQRKVVIDDIDIDPSGSAYLVANDRYQEFRSILINTHLSDEFLHLTPDNAAALGVVAGDVVRIISLFAPETKK</sequence>
<evidence type="ECO:0000255" key="1">
    <source>
        <dbReference type="HAMAP-Rule" id="MF_01171"/>
    </source>
</evidence>
<keyword id="KW-0012">Acyltransferase</keyword>
<keyword id="KW-0056">Arginine metabolism</keyword>
<keyword id="KW-0808">Transferase</keyword>
<proteinExistence type="inferred from homology"/>
<protein>
    <recommendedName>
        <fullName evidence="1">Arginine N-succinyltransferase</fullName>
        <shortName evidence="1">AST</shortName>
        <ecNumber evidence="1">2.3.1.109</ecNumber>
    </recommendedName>
    <alternativeName>
        <fullName evidence="1">AOST</fullName>
    </alternativeName>
</protein>